<dbReference type="EC" id="2.7.7.101" evidence="1"/>
<dbReference type="EMBL" id="U20669">
    <property type="protein sequence ID" value="AAB60207.1"/>
    <property type="molecule type" value="Genomic_DNA"/>
</dbReference>
<dbReference type="PIR" id="S70829">
    <property type="entry name" value="S70829"/>
</dbReference>
<dbReference type="SMR" id="P50070"/>
<dbReference type="OMA" id="LMWPIRD"/>
<dbReference type="GO" id="GO:0005737">
    <property type="term" value="C:cytoplasm"/>
    <property type="evidence" value="ECO:0007669"/>
    <property type="project" value="TreeGrafter"/>
</dbReference>
<dbReference type="GO" id="GO:0000428">
    <property type="term" value="C:DNA-directed RNA polymerase complex"/>
    <property type="evidence" value="ECO:0007669"/>
    <property type="project" value="UniProtKB-KW"/>
</dbReference>
<dbReference type="GO" id="GO:1990077">
    <property type="term" value="C:primosome complex"/>
    <property type="evidence" value="ECO:0007669"/>
    <property type="project" value="UniProtKB-KW"/>
</dbReference>
<dbReference type="GO" id="GO:0003677">
    <property type="term" value="F:DNA binding"/>
    <property type="evidence" value="ECO:0007669"/>
    <property type="project" value="UniProtKB-KW"/>
</dbReference>
<dbReference type="GO" id="GO:0003899">
    <property type="term" value="F:DNA-directed RNA polymerase activity"/>
    <property type="evidence" value="ECO:0007669"/>
    <property type="project" value="InterPro"/>
</dbReference>
<dbReference type="GO" id="GO:0008270">
    <property type="term" value="F:zinc ion binding"/>
    <property type="evidence" value="ECO:0007669"/>
    <property type="project" value="UniProtKB-UniRule"/>
</dbReference>
<dbReference type="GO" id="GO:0006269">
    <property type="term" value="P:DNA replication, synthesis of primer"/>
    <property type="evidence" value="ECO:0007669"/>
    <property type="project" value="UniProtKB-UniRule"/>
</dbReference>
<dbReference type="CDD" id="cd03364">
    <property type="entry name" value="TOPRIM_DnaG_primases"/>
    <property type="match status" value="1"/>
</dbReference>
<dbReference type="FunFam" id="3.90.580.10:FF:000001">
    <property type="entry name" value="DNA primase"/>
    <property type="match status" value="1"/>
</dbReference>
<dbReference type="Gene3D" id="3.40.1360.10">
    <property type="match status" value="1"/>
</dbReference>
<dbReference type="Gene3D" id="3.90.980.10">
    <property type="entry name" value="DNA primase, catalytic core, N-terminal domain"/>
    <property type="match status" value="1"/>
</dbReference>
<dbReference type="Gene3D" id="3.90.580.10">
    <property type="entry name" value="Zinc finger, CHC2-type domain"/>
    <property type="match status" value="1"/>
</dbReference>
<dbReference type="HAMAP" id="MF_00974">
    <property type="entry name" value="DNA_primase_DnaG"/>
    <property type="match status" value="1"/>
</dbReference>
<dbReference type="InterPro" id="IPR037068">
    <property type="entry name" value="DNA_primase_core_N_sf"/>
</dbReference>
<dbReference type="InterPro" id="IPR006295">
    <property type="entry name" value="DNA_primase_DnaG"/>
</dbReference>
<dbReference type="InterPro" id="IPR036977">
    <property type="entry name" value="DNA_primase_Znf_CHC2"/>
</dbReference>
<dbReference type="InterPro" id="IPR030846">
    <property type="entry name" value="DnaG_bac"/>
</dbReference>
<dbReference type="InterPro" id="IPR013264">
    <property type="entry name" value="DNAG_N"/>
</dbReference>
<dbReference type="InterPro" id="IPR050219">
    <property type="entry name" value="DnaG_primase"/>
</dbReference>
<dbReference type="InterPro" id="IPR034151">
    <property type="entry name" value="TOPRIM_DnaG_bac"/>
</dbReference>
<dbReference type="InterPro" id="IPR006171">
    <property type="entry name" value="TOPRIM_dom"/>
</dbReference>
<dbReference type="InterPro" id="IPR002694">
    <property type="entry name" value="Znf_CHC2"/>
</dbReference>
<dbReference type="NCBIfam" id="TIGR01391">
    <property type="entry name" value="dnaG"/>
    <property type="match status" value="1"/>
</dbReference>
<dbReference type="PANTHER" id="PTHR30313">
    <property type="entry name" value="DNA PRIMASE"/>
    <property type="match status" value="1"/>
</dbReference>
<dbReference type="PANTHER" id="PTHR30313:SF2">
    <property type="entry name" value="DNA PRIMASE"/>
    <property type="match status" value="1"/>
</dbReference>
<dbReference type="Pfam" id="PF08275">
    <property type="entry name" value="DNAG_N"/>
    <property type="match status" value="1"/>
</dbReference>
<dbReference type="Pfam" id="PF13155">
    <property type="entry name" value="Toprim_2"/>
    <property type="match status" value="1"/>
</dbReference>
<dbReference type="Pfam" id="PF01807">
    <property type="entry name" value="Zn_ribbon_DnaG"/>
    <property type="match status" value="1"/>
</dbReference>
<dbReference type="SMART" id="SM00493">
    <property type="entry name" value="TOPRIM"/>
    <property type="match status" value="1"/>
</dbReference>
<dbReference type="SMART" id="SM00400">
    <property type="entry name" value="ZnF_CHCC"/>
    <property type="match status" value="1"/>
</dbReference>
<dbReference type="SUPFAM" id="SSF56731">
    <property type="entry name" value="DNA primase core"/>
    <property type="match status" value="1"/>
</dbReference>
<dbReference type="SUPFAM" id="SSF57783">
    <property type="entry name" value="Zinc beta-ribbon"/>
    <property type="match status" value="1"/>
</dbReference>
<dbReference type="PROSITE" id="PS50880">
    <property type="entry name" value="TOPRIM"/>
    <property type="match status" value="1"/>
</dbReference>
<protein>
    <recommendedName>
        <fullName evidence="1">DNA primase</fullName>
        <ecNumber evidence="1">2.7.7.101</ecNumber>
    </recommendedName>
</protein>
<proteinExistence type="inferred from homology"/>
<gene>
    <name evidence="1" type="primary">dnaG</name>
</gene>
<reference key="1">
    <citation type="journal article" date="1995" name="Mol. Microbiol.">
        <title>A missense mutation in rpoD results in an A-signalling defect in Myxococcus xanthus.</title>
        <authorList>
            <person name="Davis J.M."/>
            <person name="Mayor J."/>
            <person name="Plamann L."/>
        </authorList>
    </citation>
    <scope>NUCLEOTIDE SEQUENCE [GENOMIC DNA]</scope>
    <source>
        <strain>DK5060</strain>
    </source>
</reference>
<name>DNAG_MYXXA</name>
<comment type="function">
    <text evidence="1">RNA polymerase that catalyzes the synthesis of short RNA molecules used as primers for DNA polymerase during DNA replication.</text>
</comment>
<comment type="catalytic activity">
    <reaction evidence="1">
        <text>ssDNA + n NTP = ssDNA/pppN(pN)n-1 hybrid + (n-1) diphosphate.</text>
        <dbReference type="EC" id="2.7.7.101"/>
    </reaction>
</comment>
<comment type="cofactor">
    <cofactor evidence="1">
        <name>Zn(2+)</name>
        <dbReference type="ChEBI" id="CHEBI:29105"/>
    </cofactor>
    <text evidence="1">Binds 1 zinc ion per monomer.</text>
</comment>
<comment type="cofactor">
    <cofactor evidence="1">
        <name>Mg(2+)</name>
        <dbReference type="ChEBI" id="CHEBI:18420"/>
    </cofactor>
    <text evidence="1">Binds two Mg(2+) per subunit.</text>
</comment>
<comment type="subunit">
    <text evidence="1">Monomer. Interacts with DnaB.</text>
</comment>
<comment type="domain">
    <text evidence="1">Contains an N-terminal zinc-binding domain, a central core domain that contains the primase activity, and a C-terminal DnaB-binding domain.</text>
</comment>
<comment type="similarity">
    <text evidence="1">Belongs to the DnaG primase family.</text>
</comment>
<feature type="chain" id="PRO_0000180508" description="DNA primase">
    <location>
        <begin position="1"/>
        <end position="606"/>
    </location>
</feature>
<feature type="domain" description="Toprim" evidence="1">
    <location>
        <begin position="256"/>
        <end position="349"/>
    </location>
</feature>
<feature type="zinc finger region" description="CHC2-type" evidence="1">
    <location>
        <begin position="40"/>
        <end position="64"/>
    </location>
</feature>
<feature type="region of interest" description="Disordered" evidence="2">
    <location>
        <begin position="429"/>
        <end position="451"/>
    </location>
</feature>
<feature type="compositionally biased region" description="Pro residues" evidence="2">
    <location>
        <begin position="441"/>
        <end position="451"/>
    </location>
</feature>
<feature type="binding site" evidence="1">
    <location>
        <position position="262"/>
    </location>
    <ligand>
        <name>Mg(2+)</name>
        <dbReference type="ChEBI" id="CHEBI:18420"/>
        <label>1</label>
        <note>catalytic</note>
    </ligand>
</feature>
<feature type="binding site" evidence="1">
    <location>
        <position position="307"/>
    </location>
    <ligand>
        <name>Mg(2+)</name>
        <dbReference type="ChEBI" id="CHEBI:18420"/>
        <label>1</label>
        <note>catalytic</note>
    </ligand>
</feature>
<feature type="binding site" evidence="1">
    <location>
        <position position="307"/>
    </location>
    <ligand>
        <name>Mg(2+)</name>
        <dbReference type="ChEBI" id="CHEBI:18420"/>
        <label>2</label>
    </ligand>
</feature>
<feature type="binding site" evidence="1">
    <location>
        <position position="309"/>
    </location>
    <ligand>
        <name>Mg(2+)</name>
        <dbReference type="ChEBI" id="CHEBI:18420"/>
        <label>2</label>
    </ligand>
</feature>
<keyword id="KW-0235">DNA replication</keyword>
<keyword id="KW-0238">DNA-binding</keyword>
<keyword id="KW-0240">DNA-directed RNA polymerase</keyword>
<keyword id="KW-0460">Magnesium</keyword>
<keyword id="KW-0479">Metal-binding</keyword>
<keyword id="KW-0548">Nucleotidyltransferase</keyword>
<keyword id="KW-0639">Primosome</keyword>
<keyword id="KW-0804">Transcription</keyword>
<keyword id="KW-0808">Transferase</keyword>
<keyword id="KW-0862">Zinc</keyword>
<keyword id="KW-0863">Zinc-finger</keyword>
<sequence>MGVVIPEHKIQEVLERVDLVGLISRHVDLKKAGREWKACCPFHQEKTPSFYVVPEKRFYFCHGCRASGDAVSFVQRYLGKTFLDAVRDLARELGVDLEAEQDPSMRERQQIKEATDQAAEHFRAMLWQQDEGRSARAYIASRGVSDETAMAFGLGWAPLEWASLTERFQKLGMLEWAAKAGLVLKRNSGDGYYDFFRSRVMVPIRAPEGRPIAFGGRLIGADEGPKYLNSRESRLYNKSETLFGMDQSRDEIRKRKAAVLVEGYFDALGLHQVGVRHAVALCSTNLTAGHMQVLKRAEARELILLLDGDSAGLAAVERLSGPLLAAGATARVALLPQGDDPDTFARREGQEGVERLLEGAHPLTSHLFASLLPEGKAASFEEKMAALERLKPVVGQVPVGLVRATLFSAVAEHFGWRPADVEAALRSKVPLPKPAGGDAPPSSPNRPAPPLEKPPPALECFYVGAVLKEPRLMARDTFRVCDELSHMGLRMALAHATSGHGANDALFESSEAVKRGIESALRQLPSEPVPLEAAFLSICREIMVRRIDERLVYIKRATEQTPGAFDLTEETRQLLVERVELLALKKRVLEELKPASSGTKAPMQPV</sequence>
<evidence type="ECO:0000255" key="1">
    <source>
        <dbReference type="HAMAP-Rule" id="MF_00974"/>
    </source>
</evidence>
<evidence type="ECO:0000256" key="2">
    <source>
        <dbReference type="SAM" id="MobiDB-lite"/>
    </source>
</evidence>
<accession>P50070</accession>
<organism>
    <name type="scientific">Myxococcus xanthus</name>
    <dbReference type="NCBI Taxonomy" id="34"/>
    <lineage>
        <taxon>Bacteria</taxon>
        <taxon>Pseudomonadati</taxon>
        <taxon>Myxococcota</taxon>
        <taxon>Myxococcia</taxon>
        <taxon>Myxococcales</taxon>
        <taxon>Cystobacterineae</taxon>
        <taxon>Myxococcaceae</taxon>
        <taxon>Myxococcus</taxon>
    </lineage>
</organism>